<dbReference type="EC" id="2.3.1.35" evidence="1"/>
<dbReference type="EC" id="2.3.1.1" evidence="1"/>
<dbReference type="EMBL" id="BX897699">
    <property type="protein sequence ID" value="CAF27013.1"/>
    <property type="molecule type" value="Genomic_DNA"/>
</dbReference>
<dbReference type="RefSeq" id="WP_011180152.1">
    <property type="nucleotide sequence ID" value="NZ_LRIJ02000001.1"/>
</dbReference>
<dbReference type="SMR" id="Q6G5T6"/>
<dbReference type="MEROPS" id="T05.001"/>
<dbReference type="PaxDb" id="283166-BH02010"/>
<dbReference type="EnsemblBacteria" id="CAF27013">
    <property type="protein sequence ID" value="CAF27013"/>
    <property type="gene ID" value="BH02010"/>
</dbReference>
<dbReference type="GeneID" id="92984868"/>
<dbReference type="KEGG" id="bhe:BH02010"/>
<dbReference type="eggNOG" id="COG1364">
    <property type="taxonomic scope" value="Bacteria"/>
</dbReference>
<dbReference type="OrthoDB" id="9804242at2"/>
<dbReference type="UniPathway" id="UPA00068">
    <property type="reaction ID" value="UER00106"/>
</dbReference>
<dbReference type="UniPathway" id="UPA00068">
    <property type="reaction ID" value="UER00111"/>
</dbReference>
<dbReference type="Proteomes" id="UP000000421">
    <property type="component" value="Chromosome"/>
</dbReference>
<dbReference type="GO" id="GO:0005737">
    <property type="term" value="C:cytoplasm"/>
    <property type="evidence" value="ECO:0007669"/>
    <property type="project" value="UniProtKB-SubCell"/>
</dbReference>
<dbReference type="GO" id="GO:0004358">
    <property type="term" value="F:glutamate N-acetyltransferase activity"/>
    <property type="evidence" value="ECO:0007669"/>
    <property type="project" value="UniProtKB-UniRule"/>
</dbReference>
<dbReference type="GO" id="GO:0004042">
    <property type="term" value="F:L-glutamate N-acetyltransferase activity"/>
    <property type="evidence" value="ECO:0007669"/>
    <property type="project" value="UniProtKB-UniRule"/>
</dbReference>
<dbReference type="GO" id="GO:0006526">
    <property type="term" value="P:L-arginine biosynthetic process"/>
    <property type="evidence" value="ECO:0007669"/>
    <property type="project" value="UniProtKB-UniRule"/>
</dbReference>
<dbReference type="GO" id="GO:0006592">
    <property type="term" value="P:ornithine biosynthetic process"/>
    <property type="evidence" value="ECO:0007669"/>
    <property type="project" value="TreeGrafter"/>
</dbReference>
<dbReference type="CDD" id="cd02152">
    <property type="entry name" value="OAT"/>
    <property type="match status" value="1"/>
</dbReference>
<dbReference type="FunFam" id="3.10.20.340:FF:000003">
    <property type="entry name" value="Arginine biosynthesis bifunctional protein ArgJ"/>
    <property type="match status" value="1"/>
</dbReference>
<dbReference type="FunFam" id="3.60.70.12:FF:000001">
    <property type="entry name" value="Arginine biosynthesis bifunctional protein ArgJ, chloroplastic"/>
    <property type="match status" value="1"/>
</dbReference>
<dbReference type="Gene3D" id="3.10.20.340">
    <property type="entry name" value="ArgJ beta chain, C-terminal domain"/>
    <property type="match status" value="1"/>
</dbReference>
<dbReference type="Gene3D" id="3.60.70.12">
    <property type="entry name" value="L-amino peptidase D-ALA esterase/amidase"/>
    <property type="match status" value="1"/>
</dbReference>
<dbReference type="HAMAP" id="MF_01106">
    <property type="entry name" value="ArgJ"/>
    <property type="match status" value="1"/>
</dbReference>
<dbReference type="InterPro" id="IPR002813">
    <property type="entry name" value="Arg_biosynth_ArgJ"/>
</dbReference>
<dbReference type="InterPro" id="IPR016117">
    <property type="entry name" value="ArgJ-like_dom_sf"/>
</dbReference>
<dbReference type="InterPro" id="IPR042195">
    <property type="entry name" value="ArgJ_beta_C"/>
</dbReference>
<dbReference type="NCBIfam" id="TIGR00120">
    <property type="entry name" value="ArgJ"/>
    <property type="match status" value="1"/>
</dbReference>
<dbReference type="NCBIfam" id="NF003802">
    <property type="entry name" value="PRK05388.1"/>
    <property type="match status" value="1"/>
</dbReference>
<dbReference type="PANTHER" id="PTHR23100">
    <property type="entry name" value="ARGININE BIOSYNTHESIS BIFUNCTIONAL PROTEIN ARGJ"/>
    <property type="match status" value="1"/>
</dbReference>
<dbReference type="PANTHER" id="PTHR23100:SF0">
    <property type="entry name" value="ARGININE BIOSYNTHESIS BIFUNCTIONAL PROTEIN ARGJ, MITOCHONDRIAL"/>
    <property type="match status" value="1"/>
</dbReference>
<dbReference type="Pfam" id="PF01960">
    <property type="entry name" value="ArgJ"/>
    <property type="match status" value="1"/>
</dbReference>
<dbReference type="SUPFAM" id="SSF56266">
    <property type="entry name" value="DmpA/ArgJ-like"/>
    <property type="match status" value="1"/>
</dbReference>
<evidence type="ECO:0000255" key="1">
    <source>
        <dbReference type="HAMAP-Rule" id="MF_01106"/>
    </source>
</evidence>
<name>ARGJ_BARHE</name>
<organism>
    <name type="scientific">Bartonella henselae (strain ATCC 49882 / DSM 28221 / CCUG 30454 / Houston 1)</name>
    <name type="common">Rochalimaea henselae</name>
    <dbReference type="NCBI Taxonomy" id="283166"/>
    <lineage>
        <taxon>Bacteria</taxon>
        <taxon>Pseudomonadati</taxon>
        <taxon>Pseudomonadota</taxon>
        <taxon>Alphaproteobacteria</taxon>
        <taxon>Hyphomicrobiales</taxon>
        <taxon>Bartonellaceae</taxon>
        <taxon>Bartonella</taxon>
    </lineage>
</organism>
<proteinExistence type="inferred from homology"/>
<accession>Q6G5T6</accession>
<reference key="1">
    <citation type="journal article" date="2004" name="Proc. Natl. Acad. Sci. U.S.A.">
        <title>The louse-borne human pathogen Bartonella quintana is a genomic derivative of the zoonotic agent Bartonella henselae.</title>
        <authorList>
            <person name="Alsmark U.C.M."/>
            <person name="Frank A.C."/>
            <person name="Karlberg E.O."/>
            <person name="Legault B.-A."/>
            <person name="Ardell D.H."/>
            <person name="Canbaeck B."/>
            <person name="Eriksson A.-S."/>
            <person name="Naeslund A.K."/>
            <person name="Handley S.A."/>
            <person name="Huvet M."/>
            <person name="La Scola B."/>
            <person name="Holmberg M."/>
            <person name="Andersson S.G.E."/>
        </authorList>
    </citation>
    <scope>NUCLEOTIDE SEQUENCE [LARGE SCALE GENOMIC DNA]</scope>
    <source>
        <strain>ATCC 49882 / DSM 28221 / CCUG 30454 / Houston 1</strain>
    </source>
</reference>
<gene>
    <name evidence="1" type="primary">argJ</name>
    <name type="ordered locus">BH02010</name>
</gene>
<keyword id="KW-0012">Acyltransferase</keyword>
<keyword id="KW-0028">Amino-acid biosynthesis</keyword>
<keyword id="KW-0055">Arginine biosynthesis</keyword>
<keyword id="KW-0068">Autocatalytic cleavage</keyword>
<keyword id="KW-0963">Cytoplasm</keyword>
<keyword id="KW-0511">Multifunctional enzyme</keyword>
<keyword id="KW-0808">Transferase</keyword>
<protein>
    <recommendedName>
        <fullName evidence="1">Arginine biosynthesis bifunctional protein ArgJ</fullName>
    </recommendedName>
    <domain>
        <recommendedName>
            <fullName evidence="1">Glutamate N-acetyltransferase</fullName>
            <ecNumber evidence="1">2.3.1.35</ecNumber>
        </recommendedName>
        <alternativeName>
            <fullName evidence="1">Ornithine acetyltransferase</fullName>
            <shortName evidence="1">OATase</shortName>
        </alternativeName>
        <alternativeName>
            <fullName evidence="1">Ornithine transacetylase</fullName>
        </alternativeName>
    </domain>
    <domain>
        <recommendedName>
            <fullName evidence="1">Amino-acid acetyltransferase</fullName>
            <ecNumber evidence="1">2.3.1.1</ecNumber>
        </recommendedName>
        <alternativeName>
            <fullName evidence="1">N-acetylglutamate synthase</fullName>
            <shortName evidence="1">AGSase</shortName>
        </alternativeName>
    </domain>
    <component>
        <recommendedName>
            <fullName evidence="1">Arginine biosynthesis bifunctional protein ArgJ alpha chain</fullName>
        </recommendedName>
    </component>
    <component>
        <recommendedName>
            <fullName evidence="1">Arginine biosynthesis bifunctional protein ArgJ beta chain</fullName>
        </recommendedName>
    </component>
</protein>
<sequence>MALEISRLFPQNIQELPSLSGVRIATAEAGIKYKDRTDLLFIVFDKSASVAGVFTRSKCPSAPVEHCRISLPHGVARGVVVNSGNANAFTGRKGKQTVDTIICAAANALKVKKNEIFIASTGVIGEPMEASSIVNLLPSMAKTAKEGNWLEAAKAIMTTDTFPKLATRRFDCGGETITINGIAKGAGMIAPDMATMLSFVVSDAAISSQMLQSMLSEAVQESFNSITVDSDTSTSDTLMMFATGKESFPCITSKTDPRYEVFSKQLRALLHELALQVVCDGEGARHLIEVHVIGATTDNTAKIIALSIANSPLVKTAIAGEDANWGRVVMAVGKAGVEVDRDLLTIWFGEHRLAINGERDPEYCEEKIGAYMQNKHITIRVDIGLGTGKATVWSCDLTKEYVMINGDYRS</sequence>
<comment type="function">
    <text evidence="1">Catalyzes two activities which are involved in the cyclic version of arginine biosynthesis: the synthesis of N-acetylglutamate from glutamate and acetyl-CoA as the acetyl donor, and of ornithine by transacetylation between N(2)-acetylornithine and glutamate.</text>
</comment>
<comment type="catalytic activity">
    <reaction evidence="1">
        <text>N(2)-acetyl-L-ornithine + L-glutamate = N-acetyl-L-glutamate + L-ornithine</text>
        <dbReference type="Rhea" id="RHEA:15349"/>
        <dbReference type="ChEBI" id="CHEBI:29985"/>
        <dbReference type="ChEBI" id="CHEBI:44337"/>
        <dbReference type="ChEBI" id="CHEBI:46911"/>
        <dbReference type="ChEBI" id="CHEBI:57805"/>
        <dbReference type="EC" id="2.3.1.35"/>
    </reaction>
</comment>
<comment type="catalytic activity">
    <reaction evidence="1">
        <text>L-glutamate + acetyl-CoA = N-acetyl-L-glutamate + CoA + H(+)</text>
        <dbReference type="Rhea" id="RHEA:24292"/>
        <dbReference type="ChEBI" id="CHEBI:15378"/>
        <dbReference type="ChEBI" id="CHEBI:29985"/>
        <dbReference type="ChEBI" id="CHEBI:44337"/>
        <dbReference type="ChEBI" id="CHEBI:57287"/>
        <dbReference type="ChEBI" id="CHEBI:57288"/>
        <dbReference type="EC" id="2.3.1.1"/>
    </reaction>
</comment>
<comment type="pathway">
    <text evidence="1">Amino-acid biosynthesis; L-arginine biosynthesis; L-ornithine and N-acetyl-L-glutamate from L-glutamate and N(2)-acetyl-L-ornithine (cyclic): step 1/1.</text>
</comment>
<comment type="pathway">
    <text evidence="1">Amino-acid biosynthesis; L-arginine biosynthesis; N(2)-acetyl-L-ornithine from L-glutamate: step 1/4.</text>
</comment>
<comment type="subunit">
    <text evidence="1">Heterotetramer of two alpha and two beta chains.</text>
</comment>
<comment type="subcellular location">
    <subcellularLocation>
        <location evidence="1">Cytoplasm</location>
    </subcellularLocation>
</comment>
<comment type="similarity">
    <text evidence="1">Belongs to the ArgJ family.</text>
</comment>
<feature type="chain" id="PRO_0000002123" description="Arginine biosynthesis bifunctional protein ArgJ alpha chain" evidence="1">
    <location>
        <begin position="1"/>
        <end position="194"/>
    </location>
</feature>
<feature type="chain" id="PRO_0000002124" description="Arginine biosynthesis bifunctional protein ArgJ beta chain" evidence="1">
    <location>
        <begin position="195"/>
        <end position="410"/>
    </location>
</feature>
<feature type="active site" description="Nucleophile" evidence="1">
    <location>
        <position position="195"/>
    </location>
</feature>
<feature type="binding site" evidence="1">
    <location>
        <position position="158"/>
    </location>
    <ligand>
        <name>substrate</name>
    </ligand>
</feature>
<feature type="binding site" evidence="1">
    <location>
        <position position="184"/>
    </location>
    <ligand>
        <name>substrate</name>
    </ligand>
</feature>
<feature type="binding site" evidence="1">
    <location>
        <position position="195"/>
    </location>
    <ligand>
        <name>substrate</name>
    </ligand>
</feature>
<feature type="binding site" evidence="1">
    <location>
        <position position="282"/>
    </location>
    <ligand>
        <name>substrate</name>
    </ligand>
</feature>
<feature type="binding site" evidence="1">
    <location>
        <position position="405"/>
    </location>
    <ligand>
        <name>substrate</name>
    </ligand>
</feature>
<feature type="binding site" evidence="1">
    <location>
        <position position="410"/>
    </location>
    <ligand>
        <name>substrate</name>
    </ligand>
</feature>
<feature type="site" description="Involved in the stabilization of negative charge on the oxyanion by the formation of the oxyanion hole" evidence="1">
    <location>
        <position position="121"/>
    </location>
</feature>
<feature type="site" description="Involved in the stabilization of negative charge on the oxyanion by the formation of the oxyanion hole" evidence="1">
    <location>
        <position position="122"/>
    </location>
</feature>
<feature type="site" description="Cleavage; by autolysis" evidence="1">
    <location>
        <begin position="194"/>
        <end position="195"/>
    </location>
</feature>